<gene>
    <name type="primary">FXYD6</name>
</gene>
<comment type="function">
    <text evidence="1 2">Associates with and regulates the activity of the sodium/potassium-transporting ATPase (NKA) which catalyzes the hydrolysis of ATP coupled with the exchange of Na(+) and K(+) ions across the plasma membrane. Reduces the apparent affinity for intracellular Na(+) with no change in the apparent affinity for extracellular K(+) (By similarity). In addition to modulating NKA kinetics, may also function as a regulator of NKA localization to the plasma membrane (By similarity).</text>
</comment>
<comment type="subunit">
    <text evidence="2">Regulatory subunit of the sodium/potassium-transporting ATPase which is composed of a catalytic alpha subunit, a non-catalytic beta subunit and an additional regulatory subunit. The regulatory subunit, a member of the FXYD protein family, modulates the enzymatic activity in a tissue- and isoform-specific way by changing affinities of the Na+/K+-ATPase toward Na(+), K(+) or ATP.</text>
</comment>
<comment type="subcellular location">
    <subcellularLocation>
        <location evidence="1">Cell membrane</location>
        <topology evidence="4">Single-pass type I membrane protein</topology>
    </subcellularLocation>
</comment>
<comment type="similarity">
    <text evidence="4">Belongs to the FXYD family.</text>
</comment>
<accession>Q5RB29</accession>
<name>FXYD6_PONAB</name>
<keyword id="KW-1003">Cell membrane</keyword>
<keyword id="KW-0406">Ion transport</keyword>
<keyword id="KW-0472">Membrane</keyword>
<keyword id="KW-0630">Potassium</keyword>
<keyword id="KW-0633">Potassium transport</keyword>
<keyword id="KW-1185">Reference proteome</keyword>
<keyword id="KW-0732">Signal</keyword>
<keyword id="KW-0915">Sodium</keyword>
<keyword id="KW-0739">Sodium transport</keyword>
<keyword id="KW-0740">Sodium/potassium transport</keyword>
<keyword id="KW-0812">Transmembrane</keyword>
<keyword id="KW-1133">Transmembrane helix</keyword>
<keyword id="KW-0813">Transport</keyword>
<reference key="1">
    <citation type="submission" date="2004-11" db="EMBL/GenBank/DDBJ databases">
        <authorList>
            <consortium name="The German cDNA consortium"/>
        </authorList>
    </citation>
    <scope>NUCLEOTIDE SEQUENCE [LARGE SCALE MRNA]</scope>
    <source>
        <tissue>Heart</tissue>
    </source>
</reference>
<dbReference type="EMBL" id="CR858829">
    <property type="protein sequence ID" value="CAH91031.1"/>
    <property type="molecule type" value="mRNA"/>
</dbReference>
<dbReference type="RefSeq" id="NP_001125596.1">
    <property type="nucleotide sequence ID" value="NM_001132124.1"/>
</dbReference>
<dbReference type="SMR" id="Q5RB29"/>
<dbReference type="FunCoup" id="Q5RB29">
    <property type="interactions" value="535"/>
</dbReference>
<dbReference type="STRING" id="9601.ENSPPYP00000004489"/>
<dbReference type="Ensembl" id="ENSPPYT00000004665.2">
    <property type="protein sequence ID" value="ENSPPYP00000004489.2"/>
    <property type="gene ID" value="ENSPPYG00000003918.2"/>
</dbReference>
<dbReference type="GeneID" id="100172512"/>
<dbReference type="KEGG" id="pon:100172512"/>
<dbReference type="CTD" id="53826"/>
<dbReference type="eggNOG" id="ENOG502S570">
    <property type="taxonomic scope" value="Eukaryota"/>
</dbReference>
<dbReference type="GeneTree" id="ENSGT00940000153062"/>
<dbReference type="InParanoid" id="Q5RB29"/>
<dbReference type="OMA" id="RCHCGAN"/>
<dbReference type="OrthoDB" id="8895254at2759"/>
<dbReference type="Proteomes" id="UP000001595">
    <property type="component" value="Chromosome 11"/>
</dbReference>
<dbReference type="GO" id="GO:0098978">
    <property type="term" value="C:glutamatergic synapse"/>
    <property type="evidence" value="ECO:0007669"/>
    <property type="project" value="Ensembl"/>
</dbReference>
<dbReference type="GO" id="GO:0045211">
    <property type="term" value="C:postsynaptic membrane"/>
    <property type="evidence" value="ECO:0007669"/>
    <property type="project" value="Ensembl"/>
</dbReference>
<dbReference type="GO" id="GO:0042734">
    <property type="term" value="C:presynaptic membrane"/>
    <property type="evidence" value="ECO:0007669"/>
    <property type="project" value="Ensembl"/>
</dbReference>
<dbReference type="GO" id="GO:0017080">
    <property type="term" value="F:sodium channel regulator activity"/>
    <property type="evidence" value="ECO:0007669"/>
    <property type="project" value="TreeGrafter"/>
</dbReference>
<dbReference type="GO" id="GO:0006813">
    <property type="term" value="P:potassium ion transport"/>
    <property type="evidence" value="ECO:0007669"/>
    <property type="project" value="UniProtKB-KW"/>
</dbReference>
<dbReference type="GO" id="GO:0043269">
    <property type="term" value="P:regulation of monoatomic ion transport"/>
    <property type="evidence" value="ECO:0007669"/>
    <property type="project" value="InterPro"/>
</dbReference>
<dbReference type="GO" id="GO:0006814">
    <property type="term" value="P:sodium ion transport"/>
    <property type="evidence" value="ECO:0007669"/>
    <property type="project" value="UniProtKB-KW"/>
</dbReference>
<dbReference type="FunFam" id="1.20.5.780:FF:000001">
    <property type="entry name" value="Fxyd domain-containing ion transport regulator"/>
    <property type="match status" value="1"/>
</dbReference>
<dbReference type="Gene3D" id="1.20.5.780">
    <property type="entry name" value="Single helix bin"/>
    <property type="match status" value="1"/>
</dbReference>
<dbReference type="InterPro" id="IPR047297">
    <property type="entry name" value="FXYD_motif"/>
</dbReference>
<dbReference type="InterPro" id="IPR000272">
    <property type="entry name" value="Ion-transport_regulator_FXYD"/>
</dbReference>
<dbReference type="PANTHER" id="PTHR14132:SF15">
    <property type="entry name" value="FXYD DOMAIN-CONTAINING ION TRANSPORT REGULATOR 6-RELATED"/>
    <property type="match status" value="1"/>
</dbReference>
<dbReference type="PANTHER" id="PTHR14132">
    <property type="entry name" value="SODIUM/POTASSIUM-TRANSPORTING ATPASE SUBUNIT GAMMA"/>
    <property type="match status" value="1"/>
</dbReference>
<dbReference type="Pfam" id="PF02038">
    <property type="entry name" value="ATP1G1_PLM_MAT8"/>
    <property type="match status" value="1"/>
</dbReference>
<dbReference type="PROSITE" id="PS01310">
    <property type="entry name" value="FXYD"/>
    <property type="match status" value="1"/>
</dbReference>
<sequence length="95" mass="10512">MELVLVFLCSLLAPTVLASAAEKEKEMDPFHYDYQTLRIGGLVFAVVLFSVGILLILSRRCKCSFNQKPRAPGDEEAQVENLITANATEPQKAEN</sequence>
<feature type="signal peptide" evidence="1">
    <location>
        <begin position="1"/>
        <end position="18"/>
    </location>
</feature>
<feature type="chain" id="PRO_0000010375" description="FXYD domain-containing ion transport regulator 6">
    <location>
        <begin position="19"/>
        <end position="95"/>
    </location>
</feature>
<feature type="topological domain" description="Extracellular" evidence="3">
    <location>
        <begin position="19"/>
        <end position="35"/>
    </location>
</feature>
<feature type="transmembrane region" description="Helical" evidence="2">
    <location>
        <begin position="36"/>
        <end position="58"/>
    </location>
</feature>
<feature type="topological domain" description="Cytoplasmic" evidence="3">
    <location>
        <begin position="59"/>
        <end position="95"/>
    </location>
</feature>
<evidence type="ECO:0000250" key="1">
    <source>
        <dbReference type="UniProtKB" id="Q91XV6"/>
    </source>
</evidence>
<evidence type="ECO:0000250" key="2">
    <source>
        <dbReference type="UniProtKB" id="Q9H0Q3"/>
    </source>
</evidence>
<evidence type="ECO:0000255" key="3"/>
<evidence type="ECO:0000305" key="4"/>
<protein>
    <recommendedName>
        <fullName>FXYD domain-containing ion transport regulator 6</fullName>
    </recommendedName>
    <alternativeName>
        <fullName>Phosphohippolin</fullName>
    </alternativeName>
</protein>
<organism>
    <name type="scientific">Pongo abelii</name>
    <name type="common">Sumatran orangutan</name>
    <name type="synonym">Pongo pygmaeus abelii</name>
    <dbReference type="NCBI Taxonomy" id="9601"/>
    <lineage>
        <taxon>Eukaryota</taxon>
        <taxon>Metazoa</taxon>
        <taxon>Chordata</taxon>
        <taxon>Craniata</taxon>
        <taxon>Vertebrata</taxon>
        <taxon>Euteleostomi</taxon>
        <taxon>Mammalia</taxon>
        <taxon>Eutheria</taxon>
        <taxon>Euarchontoglires</taxon>
        <taxon>Primates</taxon>
        <taxon>Haplorrhini</taxon>
        <taxon>Catarrhini</taxon>
        <taxon>Hominidae</taxon>
        <taxon>Pongo</taxon>
    </lineage>
</organism>
<proteinExistence type="inferred from homology"/>